<protein>
    <recommendedName>
        <fullName evidence="1">Nucleotide-binding protein swp_1151</fullName>
    </recommendedName>
</protein>
<organism>
    <name type="scientific">Shewanella piezotolerans (strain WP3 / JCM 13877)</name>
    <dbReference type="NCBI Taxonomy" id="225849"/>
    <lineage>
        <taxon>Bacteria</taxon>
        <taxon>Pseudomonadati</taxon>
        <taxon>Pseudomonadota</taxon>
        <taxon>Gammaproteobacteria</taxon>
        <taxon>Alteromonadales</taxon>
        <taxon>Shewanellaceae</taxon>
        <taxon>Shewanella</taxon>
    </lineage>
</organism>
<feature type="chain" id="PRO_1000130650" description="Nucleotide-binding protein swp_1151">
    <location>
        <begin position="1"/>
        <end position="161"/>
    </location>
</feature>
<evidence type="ECO:0000255" key="1">
    <source>
        <dbReference type="HAMAP-Rule" id="MF_00632"/>
    </source>
</evidence>
<keyword id="KW-0547">Nucleotide-binding</keyword>
<reference key="1">
    <citation type="journal article" date="2008" name="PLoS ONE">
        <title>Environmental adaptation: genomic analysis of the piezotolerant and psychrotolerant deep-sea iron reducing bacterium Shewanella piezotolerans WP3.</title>
        <authorList>
            <person name="Wang F."/>
            <person name="Wang J."/>
            <person name="Jian H."/>
            <person name="Zhang B."/>
            <person name="Li S."/>
            <person name="Wang F."/>
            <person name="Zeng X."/>
            <person name="Gao L."/>
            <person name="Bartlett D.H."/>
            <person name="Yu J."/>
            <person name="Hu S."/>
            <person name="Xiao X."/>
        </authorList>
    </citation>
    <scope>NUCLEOTIDE SEQUENCE [LARGE SCALE GENOMIC DNA]</scope>
    <source>
        <strain>WP3 / JCM 13877</strain>
    </source>
</reference>
<dbReference type="EMBL" id="CP000472">
    <property type="protein sequence ID" value="ACJ27948.1"/>
    <property type="molecule type" value="Genomic_DNA"/>
</dbReference>
<dbReference type="RefSeq" id="WP_020911326.1">
    <property type="nucleotide sequence ID" value="NC_011566.1"/>
</dbReference>
<dbReference type="SMR" id="B8CKA9"/>
<dbReference type="STRING" id="225849.swp_1151"/>
<dbReference type="KEGG" id="swp:swp_1151"/>
<dbReference type="eggNOG" id="COG1666">
    <property type="taxonomic scope" value="Bacteria"/>
</dbReference>
<dbReference type="HOGENOM" id="CLU_099839_1_0_6"/>
<dbReference type="OrthoDB" id="9801447at2"/>
<dbReference type="Proteomes" id="UP000000753">
    <property type="component" value="Chromosome"/>
</dbReference>
<dbReference type="GO" id="GO:0005829">
    <property type="term" value="C:cytosol"/>
    <property type="evidence" value="ECO:0007669"/>
    <property type="project" value="TreeGrafter"/>
</dbReference>
<dbReference type="GO" id="GO:0000166">
    <property type="term" value="F:nucleotide binding"/>
    <property type="evidence" value="ECO:0007669"/>
    <property type="project" value="TreeGrafter"/>
</dbReference>
<dbReference type="CDD" id="cd11740">
    <property type="entry name" value="YajQ_like"/>
    <property type="match status" value="1"/>
</dbReference>
<dbReference type="FunFam" id="3.30.70.860:FF:000001">
    <property type="entry name" value="UPF0234 protein YajQ"/>
    <property type="match status" value="1"/>
</dbReference>
<dbReference type="FunFam" id="3.30.70.990:FF:000001">
    <property type="entry name" value="UPF0234 protein YajQ"/>
    <property type="match status" value="1"/>
</dbReference>
<dbReference type="Gene3D" id="3.30.70.860">
    <property type="match status" value="1"/>
</dbReference>
<dbReference type="Gene3D" id="3.30.70.990">
    <property type="entry name" value="YajQ-like, domain 2"/>
    <property type="match status" value="1"/>
</dbReference>
<dbReference type="HAMAP" id="MF_00632">
    <property type="entry name" value="YajQ"/>
    <property type="match status" value="1"/>
</dbReference>
<dbReference type="InterPro" id="IPR007551">
    <property type="entry name" value="DUF520"/>
</dbReference>
<dbReference type="InterPro" id="IPR035571">
    <property type="entry name" value="UPF0234-like_C"/>
</dbReference>
<dbReference type="InterPro" id="IPR035570">
    <property type="entry name" value="UPF0234_N"/>
</dbReference>
<dbReference type="InterPro" id="IPR036183">
    <property type="entry name" value="YajQ-like_sf"/>
</dbReference>
<dbReference type="NCBIfam" id="NF003819">
    <property type="entry name" value="PRK05412.1"/>
    <property type="match status" value="1"/>
</dbReference>
<dbReference type="PANTHER" id="PTHR30476">
    <property type="entry name" value="UPF0234 PROTEIN YAJQ"/>
    <property type="match status" value="1"/>
</dbReference>
<dbReference type="PANTHER" id="PTHR30476:SF0">
    <property type="entry name" value="UPF0234 PROTEIN YAJQ"/>
    <property type="match status" value="1"/>
</dbReference>
<dbReference type="Pfam" id="PF04461">
    <property type="entry name" value="DUF520"/>
    <property type="match status" value="1"/>
</dbReference>
<dbReference type="SUPFAM" id="SSF89963">
    <property type="entry name" value="YajQ-like"/>
    <property type="match status" value="2"/>
</dbReference>
<proteinExistence type="inferred from homology"/>
<sequence length="161" mass="18351">MPSMDIVSEVNEVELRNAVDNSVRELKSRFDFRGKEASIEYKDHVVTLSAEDDFQCQQLVDILRMQMSKRNVDPKSMDVDDKAVHSGKTFSLRVKFKEGIETLIAKKLVKLIKDSKLKVQSSIQGDSVRVTGKKRDDLQAVMALAREADLGQPFQFNNFRD</sequence>
<comment type="function">
    <text evidence="1">Nucleotide-binding protein.</text>
</comment>
<comment type="similarity">
    <text evidence="1">Belongs to the YajQ family.</text>
</comment>
<gene>
    <name type="ordered locus">swp_1151</name>
</gene>
<accession>B8CKA9</accession>
<name>Y1151_SHEPW</name>